<gene>
    <name evidence="2" type="primary">tuf</name>
    <name type="ordered locus">Fnod_1140</name>
</gene>
<name>EFTU_FERNB</name>
<protein>
    <recommendedName>
        <fullName evidence="2">Elongation factor Tu</fullName>
        <shortName evidence="2">EF-Tu</shortName>
        <ecNumber evidence="2">3.6.5.3</ecNumber>
    </recommendedName>
</protein>
<sequence length="400" mass="44338">MAKEKFVRTKPHMNVGTIGHIDHGKTTLTAAITKYCSLFGWADYTPYEMIDKAPEERARGITINITHVEYQTEKRHYAHIDCPGHADYIKNMITGAAQMDGAILVVAATDGPMPQTREHVLLARQVNVPAMIVFINKVDMVDDPELVDLVEMEVRDLLSKYEFPGDELPVIRGSALKAVEAPNDPNHPDLKAIKELLDAMDSYFPDPVREVDKPFLMPVEDVFTITGRGTVVTGRIERGVIKPGVEAEIIGMSYETKKTVITSVEMFRKELDEAMAGDNVGCLLRGVDKDEVERGQVIAKPGSITPHKKFKANIYVLKKEEGGRHTPFTKGYKPQFYIRTADVTGEIVDLPAGVEMVMPGDNVEMTIELIYPVAIEKGMRFAVREGGRTVGAGVVSEIIE</sequence>
<reference key="1">
    <citation type="submission" date="2007-07" db="EMBL/GenBank/DDBJ databases">
        <title>Complete sequence of Fervidobacterium nodosum Rt17-B1.</title>
        <authorList>
            <consortium name="US DOE Joint Genome Institute"/>
            <person name="Copeland A."/>
            <person name="Lucas S."/>
            <person name="Lapidus A."/>
            <person name="Barry K."/>
            <person name="Glavina del Rio T."/>
            <person name="Dalin E."/>
            <person name="Tice H."/>
            <person name="Pitluck S."/>
            <person name="Saunders E."/>
            <person name="Brettin T."/>
            <person name="Bruce D."/>
            <person name="Detter J.C."/>
            <person name="Han C."/>
            <person name="Schmutz J."/>
            <person name="Larimer F."/>
            <person name="Land M."/>
            <person name="Hauser L."/>
            <person name="Kyrpides N."/>
            <person name="Mikhailova N."/>
            <person name="Nelson K."/>
            <person name="Gogarten J.P."/>
            <person name="Noll K."/>
            <person name="Richardson P."/>
        </authorList>
    </citation>
    <scope>NUCLEOTIDE SEQUENCE [LARGE SCALE GENOMIC DNA]</scope>
    <source>
        <strain>ATCC 35602 / DSM 5306 / Rt17-B1</strain>
    </source>
</reference>
<feature type="chain" id="PRO_1000071362" description="Elongation factor Tu">
    <location>
        <begin position="1"/>
        <end position="400"/>
    </location>
</feature>
<feature type="domain" description="tr-type G">
    <location>
        <begin position="10"/>
        <end position="208"/>
    </location>
</feature>
<feature type="region of interest" description="G1" evidence="1">
    <location>
        <begin position="19"/>
        <end position="26"/>
    </location>
</feature>
<feature type="region of interest" description="G2" evidence="1">
    <location>
        <begin position="60"/>
        <end position="64"/>
    </location>
</feature>
<feature type="region of interest" description="G3" evidence="1">
    <location>
        <begin position="81"/>
        <end position="84"/>
    </location>
</feature>
<feature type="region of interest" description="G4" evidence="1">
    <location>
        <begin position="136"/>
        <end position="139"/>
    </location>
</feature>
<feature type="region of interest" description="G5" evidence="1">
    <location>
        <begin position="174"/>
        <end position="176"/>
    </location>
</feature>
<feature type="binding site" evidence="2">
    <location>
        <begin position="19"/>
        <end position="26"/>
    </location>
    <ligand>
        <name>GTP</name>
        <dbReference type="ChEBI" id="CHEBI:37565"/>
    </ligand>
</feature>
<feature type="binding site" evidence="2">
    <location>
        <position position="26"/>
    </location>
    <ligand>
        <name>Mg(2+)</name>
        <dbReference type="ChEBI" id="CHEBI:18420"/>
    </ligand>
</feature>
<feature type="binding site" evidence="2">
    <location>
        <begin position="81"/>
        <end position="85"/>
    </location>
    <ligand>
        <name>GTP</name>
        <dbReference type="ChEBI" id="CHEBI:37565"/>
    </ligand>
</feature>
<feature type="binding site" evidence="2">
    <location>
        <begin position="136"/>
        <end position="139"/>
    </location>
    <ligand>
        <name>GTP</name>
        <dbReference type="ChEBI" id="CHEBI:37565"/>
    </ligand>
</feature>
<keyword id="KW-0963">Cytoplasm</keyword>
<keyword id="KW-0251">Elongation factor</keyword>
<keyword id="KW-0342">GTP-binding</keyword>
<keyword id="KW-0378">Hydrolase</keyword>
<keyword id="KW-0460">Magnesium</keyword>
<keyword id="KW-0479">Metal-binding</keyword>
<keyword id="KW-0547">Nucleotide-binding</keyword>
<keyword id="KW-0648">Protein biosynthesis</keyword>
<keyword id="KW-1185">Reference proteome</keyword>
<proteinExistence type="inferred from homology"/>
<accession>A7HM54</accession>
<comment type="function">
    <text evidence="2">GTP hydrolase that promotes the GTP-dependent binding of aminoacyl-tRNA to the A-site of ribosomes during protein biosynthesis.</text>
</comment>
<comment type="catalytic activity">
    <reaction evidence="2">
        <text>GTP + H2O = GDP + phosphate + H(+)</text>
        <dbReference type="Rhea" id="RHEA:19669"/>
        <dbReference type="ChEBI" id="CHEBI:15377"/>
        <dbReference type="ChEBI" id="CHEBI:15378"/>
        <dbReference type="ChEBI" id="CHEBI:37565"/>
        <dbReference type="ChEBI" id="CHEBI:43474"/>
        <dbReference type="ChEBI" id="CHEBI:58189"/>
        <dbReference type="EC" id="3.6.5.3"/>
    </reaction>
    <physiologicalReaction direction="left-to-right" evidence="2">
        <dbReference type="Rhea" id="RHEA:19670"/>
    </physiologicalReaction>
</comment>
<comment type="subunit">
    <text evidence="2">Monomer.</text>
</comment>
<comment type="subcellular location">
    <subcellularLocation>
        <location evidence="2">Cytoplasm</location>
    </subcellularLocation>
</comment>
<comment type="similarity">
    <text evidence="2">Belongs to the TRAFAC class translation factor GTPase superfamily. Classic translation factor GTPase family. EF-Tu/EF-1A subfamily.</text>
</comment>
<dbReference type="EC" id="3.6.5.3" evidence="2"/>
<dbReference type="EMBL" id="CP000771">
    <property type="protein sequence ID" value="ABS60987.1"/>
    <property type="molecule type" value="Genomic_DNA"/>
</dbReference>
<dbReference type="RefSeq" id="WP_011994300.1">
    <property type="nucleotide sequence ID" value="NC_009718.1"/>
</dbReference>
<dbReference type="SMR" id="A7HM54"/>
<dbReference type="STRING" id="381764.Fnod_1140"/>
<dbReference type="KEGG" id="fno:Fnod_1140"/>
<dbReference type="eggNOG" id="COG0050">
    <property type="taxonomic scope" value="Bacteria"/>
</dbReference>
<dbReference type="HOGENOM" id="CLU_007265_0_1_0"/>
<dbReference type="OrthoDB" id="9804504at2"/>
<dbReference type="Proteomes" id="UP000002415">
    <property type="component" value="Chromosome"/>
</dbReference>
<dbReference type="GO" id="GO:0005829">
    <property type="term" value="C:cytosol"/>
    <property type="evidence" value="ECO:0007669"/>
    <property type="project" value="TreeGrafter"/>
</dbReference>
<dbReference type="GO" id="GO:0005525">
    <property type="term" value="F:GTP binding"/>
    <property type="evidence" value="ECO:0007669"/>
    <property type="project" value="UniProtKB-UniRule"/>
</dbReference>
<dbReference type="GO" id="GO:0003924">
    <property type="term" value="F:GTPase activity"/>
    <property type="evidence" value="ECO:0007669"/>
    <property type="project" value="InterPro"/>
</dbReference>
<dbReference type="GO" id="GO:0003746">
    <property type="term" value="F:translation elongation factor activity"/>
    <property type="evidence" value="ECO:0007669"/>
    <property type="project" value="UniProtKB-UniRule"/>
</dbReference>
<dbReference type="CDD" id="cd01884">
    <property type="entry name" value="EF_Tu"/>
    <property type="match status" value="1"/>
</dbReference>
<dbReference type="CDD" id="cd03697">
    <property type="entry name" value="EFTU_II"/>
    <property type="match status" value="1"/>
</dbReference>
<dbReference type="CDD" id="cd03707">
    <property type="entry name" value="EFTU_III"/>
    <property type="match status" value="1"/>
</dbReference>
<dbReference type="FunFam" id="2.40.30.10:FF:000001">
    <property type="entry name" value="Elongation factor Tu"/>
    <property type="match status" value="1"/>
</dbReference>
<dbReference type="FunFam" id="3.40.50.300:FF:000003">
    <property type="entry name" value="Elongation factor Tu"/>
    <property type="match status" value="1"/>
</dbReference>
<dbReference type="Gene3D" id="3.40.50.300">
    <property type="entry name" value="P-loop containing nucleotide triphosphate hydrolases"/>
    <property type="match status" value="1"/>
</dbReference>
<dbReference type="Gene3D" id="2.40.30.10">
    <property type="entry name" value="Translation factors"/>
    <property type="match status" value="2"/>
</dbReference>
<dbReference type="HAMAP" id="MF_00118_B">
    <property type="entry name" value="EF_Tu_B"/>
    <property type="match status" value="1"/>
</dbReference>
<dbReference type="InterPro" id="IPR041709">
    <property type="entry name" value="EF-Tu_GTP-bd"/>
</dbReference>
<dbReference type="InterPro" id="IPR050055">
    <property type="entry name" value="EF-Tu_GTPase"/>
</dbReference>
<dbReference type="InterPro" id="IPR004161">
    <property type="entry name" value="EFTu-like_2"/>
</dbReference>
<dbReference type="InterPro" id="IPR033720">
    <property type="entry name" value="EFTU_2"/>
</dbReference>
<dbReference type="InterPro" id="IPR031157">
    <property type="entry name" value="G_TR_CS"/>
</dbReference>
<dbReference type="InterPro" id="IPR027417">
    <property type="entry name" value="P-loop_NTPase"/>
</dbReference>
<dbReference type="InterPro" id="IPR005225">
    <property type="entry name" value="Small_GTP-bd"/>
</dbReference>
<dbReference type="InterPro" id="IPR000795">
    <property type="entry name" value="T_Tr_GTP-bd_dom"/>
</dbReference>
<dbReference type="InterPro" id="IPR009000">
    <property type="entry name" value="Transl_B-barrel_sf"/>
</dbReference>
<dbReference type="InterPro" id="IPR009001">
    <property type="entry name" value="Transl_elong_EF1A/Init_IF2_C"/>
</dbReference>
<dbReference type="InterPro" id="IPR004541">
    <property type="entry name" value="Transl_elong_EFTu/EF1A_bac/org"/>
</dbReference>
<dbReference type="InterPro" id="IPR004160">
    <property type="entry name" value="Transl_elong_EFTu/EF1A_C"/>
</dbReference>
<dbReference type="NCBIfam" id="TIGR00485">
    <property type="entry name" value="EF-Tu"/>
    <property type="match status" value="1"/>
</dbReference>
<dbReference type="NCBIfam" id="NF000766">
    <property type="entry name" value="PRK00049.1"/>
    <property type="match status" value="1"/>
</dbReference>
<dbReference type="NCBIfam" id="NF009372">
    <property type="entry name" value="PRK12735.1"/>
    <property type="match status" value="1"/>
</dbReference>
<dbReference type="NCBIfam" id="NF009373">
    <property type="entry name" value="PRK12736.1"/>
    <property type="match status" value="1"/>
</dbReference>
<dbReference type="NCBIfam" id="TIGR00231">
    <property type="entry name" value="small_GTP"/>
    <property type="match status" value="1"/>
</dbReference>
<dbReference type="PANTHER" id="PTHR43721:SF22">
    <property type="entry name" value="ELONGATION FACTOR TU, MITOCHONDRIAL"/>
    <property type="match status" value="1"/>
</dbReference>
<dbReference type="PANTHER" id="PTHR43721">
    <property type="entry name" value="ELONGATION FACTOR TU-RELATED"/>
    <property type="match status" value="1"/>
</dbReference>
<dbReference type="Pfam" id="PF00009">
    <property type="entry name" value="GTP_EFTU"/>
    <property type="match status" value="1"/>
</dbReference>
<dbReference type="Pfam" id="PF03144">
    <property type="entry name" value="GTP_EFTU_D2"/>
    <property type="match status" value="1"/>
</dbReference>
<dbReference type="Pfam" id="PF03143">
    <property type="entry name" value="GTP_EFTU_D3"/>
    <property type="match status" value="1"/>
</dbReference>
<dbReference type="PRINTS" id="PR00315">
    <property type="entry name" value="ELONGATNFCT"/>
</dbReference>
<dbReference type="SUPFAM" id="SSF50465">
    <property type="entry name" value="EF-Tu/eEF-1alpha/eIF2-gamma C-terminal domain"/>
    <property type="match status" value="1"/>
</dbReference>
<dbReference type="SUPFAM" id="SSF52540">
    <property type="entry name" value="P-loop containing nucleoside triphosphate hydrolases"/>
    <property type="match status" value="1"/>
</dbReference>
<dbReference type="SUPFAM" id="SSF50447">
    <property type="entry name" value="Translation proteins"/>
    <property type="match status" value="1"/>
</dbReference>
<dbReference type="PROSITE" id="PS00301">
    <property type="entry name" value="G_TR_1"/>
    <property type="match status" value="1"/>
</dbReference>
<dbReference type="PROSITE" id="PS51722">
    <property type="entry name" value="G_TR_2"/>
    <property type="match status" value="1"/>
</dbReference>
<organism>
    <name type="scientific">Fervidobacterium nodosum (strain ATCC 35602 / DSM 5306 / Rt17-B1)</name>
    <dbReference type="NCBI Taxonomy" id="381764"/>
    <lineage>
        <taxon>Bacteria</taxon>
        <taxon>Thermotogati</taxon>
        <taxon>Thermotogota</taxon>
        <taxon>Thermotogae</taxon>
        <taxon>Thermotogales</taxon>
        <taxon>Fervidobacteriaceae</taxon>
        <taxon>Fervidobacterium</taxon>
    </lineage>
</organism>
<evidence type="ECO:0000250" key="1"/>
<evidence type="ECO:0000255" key="2">
    <source>
        <dbReference type="HAMAP-Rule" id="MF_00118"/>
    </source>
</evidence>